<dbReference type="EMBL" id="CP000051">
    <property type="protein sequence ID" value="AAX50958.1"/>
    <property type="molecule type" value="Genomic_DNA"/>
</dbReference>
<dbReference type="RefSeq" id="WP_011324822.1">
    <property type="nucleotide sequence ID" value="NC_007429.1"/>
</dbReference>
<dbReference type="SMR" id="Q3KL14"/>
<dbReference type="KEGG" id="cta:CTA_0740"/>
<dbReference type="HOGENOM" id="CLU_040318_1_3_0"/>
<dbReference type="Proteomes" id="UP000002532">
    <property type="component" value="Chromosome"/>
</dbReference>
<dbReference type="GO" id="GO:0022627">
    <property type="term" value="C:cytosolic small ribosomal subunit"/>
    <property type="evidence" value="ECO:0007669"/>
    <property type="project" value="TreeGrafter"/>
</dbReference>
<dbReference type="GO" id="GO:0003735">
    <property type="term" value="F:structural constituent of ribosome"/>
    <property type="evidence" value="ECO:0007669"/>
    <property type="project" value="InterPro"/>
</dbReference>
<dbReference type="GO" id="GO:0006412">
    <property type="term" value="P:translation"/>
    <property type="evidence" value="ECO:0007669"/>
    <property type="project" value="UniProtKB-UniRule"/>
</dbReference>
<dbReference type="CDD" id="cd01425">
    <property type="entry name" value="RPS2"/>
    <property type="match status" value="1"/>
</dbReference>
<dbReference type="Gene3D" id="3.40.50.10490">
    <property type="entry name" value="Glucose-6-phosphate isomerase like protein, domain 1"/>
    <property type="match status" value="1"/>
</dbReference>
<dbReference type="Gene3D" id="1.10.287.610">
    <property type="entry name" value="Helix hairpin bin"/>
    <property type="match status" value="1"/>
</dbReference>
<dbReference type="HAMAP" id="MF_00291_B">
    <property type="entry name" value="Ribosomal_uS2_B"/>
    <property type="match status" value="1"/>
</dbReference>
<dbReference type="InterPro" id="IPR001865">
    <property type="entry name" value="Ribosomal_uS2"/>
</dbReference>
<dbReference type="InterPro" id="IPR005706">
    <property type="entry name" value="Ribosomal_uS2_bac/mit/plastid"/>
</dbReference>
<dbReference type="InterPro" id="IPR018130">
    <property type="entry name" value="Ribosomal_uS2_CS"/>
</dbReference>
<dbReference type="InterPro" id="IPR023591">
    <property type="entry name" value="Ribosomal_uS2_flav_dom_sf"/>
</dbReference>
<dbReference type="NCBIfam" id="TIGR01011">
    <property type="entry name" value="rpsB_bact"/>
    <property type="match status" value="1"/>
</dbReference>
<dbReference type="PANTHER" id="PTHR12534">
    <property type="entry name" value="30S RIBOSOMAL PROTEIN S2 PROKARYOTIC AND ORGANELLAR"/>
    <property type="match status" value="1"/>
</dbReference>
<dbReference type="PANTHER" id="PTHR12534:SF0">
    <property type="entry name" value="SMALL RIBOSOMAL SUBUNIT PROTEIN US2M"/>
    <property type="match status" value="1"/>
</dbReference>
<dbReference type="Pfam" id="PF00318">
    <property type="entry name" value="Ribosomal_S2"/>
    <property type="match status" value="1"/>
</dbReference>
<dbReference type="PRINTS" id="PR00395">
    <property type="entry name" value="RIBOSOMALS2"/>
</dbReference>
<dbReference type="SUPFAM" id="SSF52313">
    <property type="entry name" value="Ribosomal protein S2"/>
    <property type="match status" value="1"/>
</dbReference>
<dbReference type="PROSITE" id="PS00962">
    <property type="entry name" value="RIBOSOMAL_S2_1"/>
    <property type="match status" value="1"/>
</dbReference>
<dbReference type="PROSITE" id="PS00963">
    <property type="entry name" value="RIBOSOMAL_S2_2"/>
    <property type="match status" value="1"/>
</dbReference>
<name>RS2_CHLTA</name>
<gene>
    <name evidence="1" type="primary">rpsB</name>
    <name type="ordered locus">CTA_0740</name>
</gene>
<accession>Q3KL14</accession>
<sequence>MEFPCTLTLKELLESGAHFGHQTSRWNPRMKPFIFEEKNGLYIIDLAKTLAQLKKAVACIQTTIGQEKSILFVGTKKQAKQIIREAAIECGEFFASERWLGGMLTNMATIRNSVKTLNRIELDLEASNSGLTKKELALLAKRHRKLLNNLEGVRHMNSLPGLLIVIDPGYERIAVAEAGKLGIPVMALVDTNCDPTPINHVIPCNDDSMKSIRLIVNVLKDAVIDAKKRLGIGILSPVRPAERPAEEAVEELPLPTGEAQDEASSKEGFLLWADIDNCEALK</sequence>
<keyword id="KW-0687">Ribonucleoprotein</keyword>
<keyword id="KW-0689">Ribosomal protein</keyword>
<evidence type="ECO:0000255" key="1">
    <source>
        <dbReference type="HAMAP-Rule" id="MF_00291"/>
    </source>
</evidence>
<evidence type="ECO:0000256" key="2">
    <source>
        <dbReference type="SAM" id="MobiDB-lite"/>
    </source>
</evidence>
<evidence type="ECO:0000305" key="3"/>
<reference key="1">
    <citation type="journal article" date="2005" name="Infect. Immun.">
        <title>Comparative genomic analysis of Chlamydia trachomatis oculotropic and genitotropic strains.</title>
        <authorList>
            <person name="Carlson J.H."/>
            <person name="Porcella S.F."/>
            <person name="McClarty G."/>
            <person name="Caldwell H.D."/>
        </authorList>
    </citation>
    <scope>NUCLEOTIDE SEQUENCE [LARGE SCALE GENOMIC DNA]</scope>
    <source>
        <strain>ATCC VR-571B / DSM 19440 / HAR-13</strain>
    </source>
</reference>
<proteinExistence type="inferred from homology"/>
<feature type="chain" id="PRO_1000003929" description="Small ribosomal subunit protein uS2">
    <location>
        <begin position="1"/>
        <end position="282"/>
    </location>
</feature>
<feature type="region of interest" description="Disordered" evidence="2">
    <location>
        <begin position="245"/>
        <end position="265"/>
    </location>
</feature>
<organism>
    <name type="scientific">Chlamydia trachomatis serovar A (strain ATCC VR-571B / DSM 19440 / HAR-13)</name>
    <dbReference type="NCBI Taxonomy" id="315277"/>
    <lineage>
        <taxon>Bacteria</taxon>
        <taxon>Pseudomonadati</taxon>
        <taxon>Chlamydiota</taxon>
        <taxon>Chlamydiia</taxon>
        <taxon>Chlamydiales</taxon>
        <taxon>Chlamydiaceae</taxon>
        <taxon>Chlamydia/Chlamydophila group</taxon>
        <taxon>Chlamydia</taxon>
    </lineage>
</organism>
<comment type="similarity">
    <text evidence="1">Belongs to the universal ribosomal protein uS2 family.</text>
</comment>
<protein>
    <recommendedName>
        <fullName evidence="1">Small ribosomal subunit protein uS2</fullName>
    </recommendedName>
    <alternativeName>
        <fullName evidence="3">30S ribosomal protein S2</fullName>
    </alternativeName>
</protein>